<comment type="subunit">
    <text evidence="1">Part of the 50S ribosomal subunit. Contacts protein L32.</text>
</comment>
<comment type="similarity">
    <text evidence="1">Belongs to the bacterial ribosomal protein bL17 family.</text>
</comment>
<reference key="1">
    <citation type="journal article" date="2000" name="Nature">
        <title>Genome sequence of the endocellular bacterial symbiont of aphids Buchnera sp. APS.</title>
        <authorList>
            <person name="Shigenobu S."/>
            <person name="Watanabe H."/>
            <person name="Hattori M."/>
            <person name="Sakaki Y."/>
            <person name="Ishikawa H."/>
        </authorList>
    </citation>
    <scope>NUCLEOTIDE SEQUENCE [LARGE SCALE GENOMIC DNA]</scope>
    <source>
        <strain>APS</strain>
    </source>
</reference>
<proteinExistence type="inferred from homology"/>
<accession>P57565</accession>
<dbReference type="EMBL" id="BA000003">
    <property type="protein sequence ID" value="BAB13191.1"/>
    <property type="molecule type" value="Genomic_DNA"/>
</dbReference>
<dbReference type="RefSeq" id="NP_240305.1">
    <property type="nucleotide sequence ID" value="NC_002528.1"/>
</dbReference>
<dbReference type="RefSeq" id="WP_010896143.1">
    <property type="nucleotide sequence ID" value="NC_002528.1"/>
</dbReference>
<dbReference type="SMR" id="P57565"/>
<dbReference type="STRING" id="563178.BUAP5A_491"/>
<dbReference type="EnsemblBacteria" id="BAB13191">
    <property type="protein sequence ID" value="BAB13191"/>
    <property type="gene ID" value="BAB13191"/>
</dbReference>
<dbReference type="KEGG" id="buc:BU498"/>
<dbReference type="PATRIC" id="fig|107806.10.peg.503"/>
<dbReference type="eggNOG" id="COG0203">
    <property type="taxonomic scope" value="Bacteria"/>
</dbReference>
<dbReference type="HOGENOM" id="CLU_074407_2_0_6"/>
<dbReference type="Proteomes" id="UP000001806">
    <property type="component" value="Chromosome"/>
</dbReference>
<dbReference type="GO" id="GO:0022625">
    <property type="term" value="C:cytosolic large ribosomal subunit"/>
    <property type="evidence" value="ECO:0007669"/>
    <property type="project" value="TreeGrafter"/>
</dbReference>
<dbReference type="GO" id="GO:0003735">
    <property type="term" value="F:structural constituent of ribosome"/>
    <property type="evidence" value="ECO:0007669"/>
    <property type="project" value="InterPro"/>
</dbReference>
<dbReference type="GO" id="GO:0006412">
    <property type="term" value="P:translation"/>
    <property type="evidence" value="ECO:0007669"/>
    <property type="project" value="UniProtKB-UniRule"/>
</dbReference>
<dbReference type="FunFam" id="3.90.1030.10:FF:000001">
    <property type="entry name" value="50S ribosomal protein L17"/>
    <property type="match status" value="1"/>
</dbReference>
<dbReference type="Gene3D" id="3.90.1030.10">
    <property type="entry name" value="Ribosomal protein L17"/>
    <property type="match status" value="1"/>
</dbReference>
<dbReference type="HAMAP" id="MF_01368">
    <property type="entry name" value="Ribosomal_bL17"/>
    <property type="match status" value="1"/>
</dbReference>
<dbReference type="InterPro" id="IPR000456">
    <property type="entry name" value="Ribosomal_bL17"/>
</dbReference>
<dbReference type="InterPro" id="IPR047859">
    <property type="entry name" value="Ribosomal_bL17_CS"/>
</dbReference>
<dbReference type="InterPro" id="IPR036373">
    <property type="entry name" value="Ribosomal_bL17_sf"/>
</dbReference>
<dbReference type="NCBIfam" id="TIGR00059">
    <property type="entry name" value="L17"/>
    <property type="match status" value="1"/>
</dbReference>
<dbReference type="PANTHER" id="PTHR14413:SF16">
    <property type="entry name" value="LARGE RIBOSOMAL SUBUNIT PROTEIN BL17M"/>
    <property type="match status" value="1"/>
</dbReference>
<dbReference type="PANTHER" id="PTHR14413">
    <property type="entry name" value="RIBOSOMAL PROTEIN L17"/>
    <property type="match status" value="1"/>
</dbReference>
<dbReference type="Pfam" id="PF01196">
    <property type="entry name" value="Ribosomal_L17"/>
    <property type="match status" value="1"/>
</dbReference>
<dbReference type="SUPFAM" id="SSF64263">
    <property type="entry name" value="Prokaryotic ribosomal protein L17"/>
    <property type="match status" value="1"/>
</dbReference>
<dbReference type="PROSITE" id="PS01167">
    <property type="entry name" value="RIBOSOMAL_L17"/>
    <property type="match status" value="1"/>
</dbReference>
<feature type="chain" id="PRO_0000175517" description="Large ribosomal subunit protein bL17">
    <location>
        <begin position="1"/>
        <end position="130"/>
    </location>
</feature>
<keyword id="KW-1185">Reference proteome</keyword>
<keyword id="KW-0687">Ribonucleoprotein</keyword>
<keyword id="KW-0689">Ribosomal protein</keyword>
<organism>
    <name type="scientific">Buchnera aphidicola subsp. Acyrthosiphon pisum (strain APS)</name>
    <name type="common">Acyrthosiphon pisum symbiotic bacterium</name>
    <dbReference type="NCBI Taxonomy" id="107806"/>
    <lineage>
        <taxon>Bacteria</taxon>
        <taxon>Pseudomonadati</taxon>
        <taxon>Pseudomonadota</taxon>
        <taxon>Gammaproteobacteria</taxon>
        <taxon>Enterobacterales</taxon>
        <taxon>Erwiniaceae</taxon>
        <taxon>Buchnera</taxon>
    </lineage>
</organism>
<evidence type="ECO:0000255" key="1">
    <source>
        <dbReference type="HAMAP-Rule" id="MF_01368"/>
    </source>
</evidence>
<evidence type="ECO:0000305" key="2"/>
<sequence>MRHRKSGRQLNRSSTHLNSMLKNMACSLFTHEVIKTTLSKAKELRRIVEPIITLSKIDTVSRRRLVFSRIRDNAIVAKLFKKLGPCFFSRLGGYTRILKCGFRSGDKAPMAYIELVDRVKNNKKNEILKK</sequence>
<name>RL17_BUCAI</name>
<gene>
    <name evidence="1" type="primary">rplQ</name>
    <name type="ordered locus">BU498</name>
</gene>
<protein>
    <recommendedName>
        <fullName evidence="1">Large ribosomal subunit protein bL17</fullName>
    </recommendedName>
    <alternativeName>
        <fullName evidence="2">50S ribosomal protein L17</fullName>
    </alternativeName>
</protein>